<keyword id="KW-1003">Cell membrane</keyword>
<keyword id="KW-0966">Cell projection</keyword>
<keyword id="KW-0963">Cytoplasm</keyword>
<keyword id="KW-0206">Cytoskeleton</keyword>
<keyword id="KW-0325">Glycoprotein</keyword>
<keyword id="KW-0333">Golgi apparatus</keyword>
<keyword id="KW-0472">Membrane</keyword>
<keyword id="KW-1185">Reference proteome</keyword>
<keyword id="KW-0812">Transmembrane</keyword>
<keyword id="KW-1133">Transmembrane helix</keyword>
<keyword id="KW-0832">Ubl conjugation</keyword>
<gene>
    <name evidence="2" type="primary">SGCE</name>
    <name type="ORF">QtrA-13407</name>
</gene>
<accession>Q4R5B1</accession>
<reference evidence="5" key="1">
    <citation type="submission" date="2005-06" db="EMBL/GenBank/DDBJ databases">
        <title>DNA sequences of macaque genes expressed in brain or testis and its evolutionary implications.</title>
        <authorList>
            <consortium name="International consortium for macaque cDNA sequencing and analysis"/>
        </authorList>
    </citation>
    <scope>NUCLEOTIDE SEQUENCE [LARGE SCALE MRNA]</scope>
    <source>
        <tissue>Temporal cortex</tissue>
    </source>
</reference>
<evidence type="ECO:0000250" key="1"/>
<evidence type="ECO:0000250" key="2">
    <source>
        <dbReference type="UniProtKB" id="O43556"/>
    </source>
</evidence>
<evidence type="ECO:0000250" key="3">
    <source>
        <dbReference type="UniProtKB" id="P82350"/>
    </source>
</evidence>
<evidence type="ECO:0000255" key="4"/>
<evidence type="ECO:0000312" key="5">
    <source>
        <dbReference type="EMBL" id="BAE01714.1"/>
    </source>
</evidence>
<comment type="function">
    <text evidence="2">Component of the sarcoglycan complex, a subcomplex of the dystrophin-glycoprotein complex which forms a link between the F-actin cytoskeleton and the extracellular matrix.</text>
</comment>
<comment type="subcellular location">
    <subcellularLocation>
        <location evidence="1">Cell membrane</location>
        <location evidence="1">Sarcolemma</location>
        <topology evidence="1">Single-pass membrane protein</topology>
    </subcellularLocation>
    <subcellularLocation>
        <location evidence="3">Cytoplasm</location>
        <location evidence="3">Cytoskeleton</location>
    </subcellularLocation>
    <subcellularLocation>
        <location evidence="1">Cell projection</location>
        <location evidence="1">Dendrite</location>
    </subcellularLocation>
    <subcellularLocation>
        <location evidence="1">Golgi apparatus</location>
    </subcellularLocation>
</comment>
<comment type="PTM">
    <text evidence="1">N-glycosylated.</text>
</comment>
<comment type="PTM">
    <text evidence="1">Ubiquitinated, leading to its degradation by the proteasome.</text>
</comment>
<comment type="similarity">
    <text evidence="4">Belongs to the sarcoglycan alpha/epsilon family.</text>
</comment>
<sequence length="437" mass="49865">MQLPRWWELGDPCAWTGQGRGTRRMSPATTGTFLLTVYTIFSKVHSDRNVYPSAGVLFVHVLEREYFKGEFPPYPKPGEISNDPITFNTNLMGYPDRPGWLRYIQRTPYSDGVLYGSPTAENVGKPTIIEITAYNRRTFETARHNLIINIMSAEDFPLPYQAEFFIKNMNVEEMLASEVLGDFLGAVKNVWQPERLNAINITSALDRGGRVPLPINDLKEGVYVMVGADVPFSSCLREVENPQNQLRCSQEMEPVITCDKKFRTQFYIDWCKISLVDKTKQVSTYQEVIRGEGILPDGGEYKPPSDSLKSRDYYTDFLITLAVPSAVALVLFLILAYIMCCRREGVEKRNMQTPDIQLVHHSAIQKSTKELRDMSKNREIAWPLSTLPVFHPVTGEIIPPLHTDNYDSTNMPLMQTQQNLPHQTQIPQQQTTGKWYP</sequence>
<protein>
    <recommendedName>
        <fullName evidence="2">Epsilon-sarcoglycan</fullName>
        <shortName evidence="2">Epsilon-SG</shortName>
    </recommendedName>
</protein>
<name>SGCE_MACFA</name>
<feature type="chain" id="PRO_0000378622" description="Epsilon-sarcoglycan">
    <location>
        <begin position="1"/>
        <end position="437"/>
    </location>
</feature>
<feature type="topological domain" description="Extracellular" evidence="2 4">
    <location>
        <begin position="1"/>
        <end position="317"/>
    </location>
</feature>
<feature type="transmembrane region" description="Helical" evidence="4">
    <location>
        <begin position="318"/>
        <end position="338"/>
    </location>
</feature>
<feature type="topological domain" description="Cytoplasmic" evidence="2 4">
    <location>
        <begin position="339"/>
        <end position="437"/>
    </location>
</feature>
<feature type="glycosylation site" description="N-linked (GlcNAc...) asparagine" evidence="4">
    <location>
        <position position="200"/>
    </location>
</feature>
<organism>
    <name type="scientific">Macaca fascicularis</name>
    <name type="common">Crab-eating macaque</name>
    <name type="synonym">Cynomolgus monkey</name>
    <dbReference type="NCBI Taxonomy" id="9541"/>
    <lineage>
        <taxon>Eukaryota</taxon>
        <taxon>Metazoa</taxon>
        <taxon>Chordata</taxon>
        <taxon>Craniata</taxon>
        <taxon>Vertebrata</taxon>
        <taxon>Euteleostomi</taxon>
        <taxon>Mammalia</taxon>
        <taxon>Eutheria</taxon>
        <taxon>Euarchontoglires</taxon>
        <taxon>Primates</taxon>
        <taxon>Haplorrhini</taxon>
        <taxon>Catarrhini</taxon>
        <taxon>Cercopithecidae</taxon>
        <taxon>Cercopithecinae</taxon>
        <taxon>Macaca</taxon>
    </lineage>
</organism>
<proteinExistence type="evidence at transcript level"/>
<dbReference type="EMBL" id="AB169633">
    <property type="protein sequence ID" value="BAE01714.1"/>
    <property type="molecule type" value="mRNA"/>
</dbReference>
<dbReference type="RefSeq" id="XP_005550257.1">
    <property type="nucleotide sequence ID" value="XM_005550200.4"/>
</dbReference>
<dbReference type="SMR" id="Q4R5B1"/>
<dbReference type="STRING" id="9541.ENSMFAP00000045502"/>
<dbReference type="GlyCosmos" id="Q4R5B1">
    <property type="glycosylation" value="1 site, No reported glycans"/>
</dbReference>
<dbReference type="GeneID" id="101865326"/>
<dbReference type="KEGG" id="mcf:101865326"/>
<dbReference type="CTD" id="8910"/>
<dbReference type="VEuPathDB" id="HostDB:ENSMFAG00000000448"/>
<dbReference type="eggNOG" id="KOG4482">
    <property type="taxonomic scope" value="Eukaryota"/>
</dbReference>
<dbReference type="Proteomes" id="UP000233100">
    <property type="component" value="Chromosome 3"/>
</dbReference>
<dbReference type="GO" id="GO:0005856">
    <property type="term" value="C:cytoskeleton"/>
    <property type="evidence" value="ECO:0007669"/>
    <property type="project" value="UniProtKB-SubCell"/>
</dbReference>
<dbReference type="GO" id="GO:0032590">
    <property type="term" value="C:dendrite membrane"/>
    <property type="evidence" value="ECO:0000250"/>
    <property type="project" value="UniProtKB"/>
</dbReference>
<dbReference type="GO" id="GO:0005794">
    <property type="term" value="C:Golgi apparatus"/>
    <property type="evidence" value="ECO:0000250"/>
    <property type="project" value="UniProtKB"/>
</dbReference>
<dbReference type="GO" id="GO:0005886">
    <property type="term" value="C:plasma membrane"/>
    <property type="evidence" value="ECO:0000250"/>
    <property type="project" value="UniProtKB"/>
</dbReference>
<dbReference type="GO" id="GO:0016012">
    <property type="term" value="C:sarcoglycan complex"/>
    <property type="evidence" value="ECO:0007669"/>
    <property type="project" value="InterPro"/>
</dbReference>
<dbReference type="GO" id="GO:0042383">
    <property type="term" value="C:sarcolemma"/>
    <property type="evidence" value="ECO:0007669"/>
    <property type="project" value="UniProtKB-SubCell"/>
</dbReference>
<dbReference type="InterPro" id="IPR006644">
    <property type="entry name" value="Cadg"/>
</dbReference>
<dbReference type="InterPro" id="IPR008908">
    <property type="entry name" value="Sarcoglycan_alpha/epsilon"/>
</dbReference>
<dbReference type="InterPro" id="IPR048347">
    <property type="entry name" value="Sarcoglycan_C"/>
</dbReference>
<dbReference type="InterPro" id="IPR048346">
    <property type="entry name" value="Sarcoglycan_N"/>
</dbReference>
<dbReference type="PANTHER" id="PTHR10132">
    <property type="entry name" value="ALPHA-/EPSILON-SARCOGLYCAN FAMILY MEMBER"/>
    <property type="match status" value="1"/>
</dbReference>
<dbReference type="PANTHER" id="PTHR10132:SF17">
    <property type="entry name" value="EPSILON-SARCOGLYCAN"/>
    <property type="match status" value="1"/>
</dbReference>
<dbReference type="Pfam" id="PF05510">
    <property type="entry name" value="Sarcoglycan_2"/>
    <property type="match status" value="1"/>
</dbReference>
<dbReference type="Pfam" id="PF20989">
    <property type="entry name" value="Sarcoglycan_2_C"/>
    <property type="match status" value="1"/>
</dbReference>
<dbReference type="SMART" id="SM00736">
    <property type="entry name" value="CADG"/>
    <property type="match status" value="1"/>
</dbReference>